<sequence>MSAKRSLKLDSVKKYNPVEASPLAKKKDLNSYSPTTGTCQISPFSSPTSHNAEDLRNGLSHGDETNSESRLSRRGQPQTAEDAFAELQSNVKSSLVRILKARENLTSLQALEGSRELENIIGVSDSSHILSAEVQKTQALMSQAEELQLLKRNHGQLPAREYAQPASSSAFLQLLLNSL</sequence>
<feature type="chain" id="PRO_0000249513" description="Centromere protein R">
    <location>
        <begin position="1"/>
        <end position="179"/>
    </location>
</feature>
<feature type="region of interest" description="Disordered" evidence="2">
    <location>
        <begin position="1"/>
        <end position="79"/>
    </location>
</feature>
<feature type="short sequence motif" description="LXXLL motif">
    <location>
        <begin position="172"/>
        <end position="176"/>
    </location>
</feature>
<feature type="compositionally biased region" description="Polar residues" evidence="2">
    <location>
        <begin position="30"/>
        <end position="50"/>
    </location>
</feature>
<feature type="compositionally biased region" description="Basic and acidic residues" evidence="2">
    <location>
        <begin position="51"/>
        <end position="64"/>
    </location>
</feature>
<gene>
    <name type="primary">CENPR</name>
    <name type="synonym">NRIF3</name>
</gene>
<keyword id="KW-0010">Activator</keyword>
<keyword id="KW-0131">Cell cycle</keyword>
<keyword id="KW-0132">Cell division</keyword>
<keyword id="KW-0137">Centromere</keyword>
<keyword id="KW-0158">Chromosome</keyword>
<keyword id="KW-0995">Kinetochore</keyword>
<keyword id="KW-0498">Mitosis</keyword>
<keyword id="KW-0539">Nucleus</keyword>
<keyword id="KW-1185">Reference proteome</keyword>
<keyword id="KW-0678">Repressor</keyword>
<keyword id="KW-0804">Transcription</keyword>
<keyword id="KW-0805">Transcription regulation</keyword>
<dbReference type="EMBL" id="AB253771">
    <property type="protein sequence ID" value="BAE93423.1"/>
    <property type="molecule type" value="mRNA"/>
</dbReference>
<dbReference type="SMR" id="Q1T763"/>
<dbReference type="FunCoup" id="Q1T763">
    <property type="interactions" value="383"/>
</dbReference>
<dbReference type="STRING" id="9031.ENSGALP00000041482"/>
<dbReference type="PaxDb" id="9031-ENSGALP00000017885"/>
<dbReference type="VEuPathDB" id="HostDB:geneid_424689"/>
<dbReference type="eggNOG" id="ENOG502S4AR">
    <property type="taxonomic scope" value="Eukaryota"/>
</dbReference>
<dbReference type="InParanoid" id="Q1T763"/>
<dbReference type="PhylomeDB" id="Q1T763"/>
<dbReference type="PRO" id="PR:Q1T763"/>
<dbReference type="Proteomes" id="UP000000539">
    <property type="component" value="Unassembled WGS sequence"/>
</dbReference>
<dbReference type="GO" id="GO:0000776">
    <property type="term" value="C:kinetochore"/>
    <property type="evidence" value="ECO:0007669"/>
    <property type="project" value="UniProtKB-KW"/>
</dbReference>
<dbReference type="GO" id="GO:0005654">
    <property type="term" value="C:nucleoplasm"/>
    <property type="evidence" value="ECO:0000318"/>
    <property type="project" value="GO_Central"/>
</dbReference>
<dbReference type="GO" id="GO:0051301">
    <property type="term" value="P:cell division"/>
    <property type="evidence" value="ECO:0007669"/>
    <property type="project" value="UniProtKB-KW"/>
</dbReference>
<dbReference type="GO" id="GO:0034080">
    <property type="term" value="P:CENP-A containing chromatin assembly"/>
    <property type="evidence" value="ECO:0007669"/>
    <property type="project" value="InterPro"/>
</dbReference>
<dbReference type="GO" id="GO:0006355">
    <property type="term" value="P:regulation of DNA-templated transcription"/>
    <property type="evidence" value="ECO:0007669"/>
    <property type="project" value="InterPro"/>
</dbReference>
<dbReference type="InterPro" id="IPR009601">
    <property type="entry name" value="CENP-R"/>
</dbReference>
<dbReference type="PANTHER" id="PTHR15581">
    <property type="entry name" value="CENTROMERE PROTEIN R"/>
    <property type="match status" value="1"/>
</dbReference>
<dbReference type="PANTHER" id="PTHR15581:SF0">
    <property type="entry name" value="CENTROMERE PROTEIN R"/>
    <property type="match status" value="1"/>
</dbReference>
<dbReference type="Pfam" id="PF06729">
    <property type="entry name" value="CENP-R"/>
    <property type="match status" value="1"/>
</dbReference>
<dbReference type="PIRSF" id="PIRSF011860">
    <property type="entry name" value="NRIF3_coact_rcpt"/>
    <property type="match status" value="1"/>
</dbReference>
<accession>Q1T763</accession>
<protein>
    <recommendedName>
        <fullName>Centromere protein R</fullName>
        <shortName>CENP-R</shortName>
    </recommendedName>
    <alternativeName>
        <fullName>Nuclear receptor-interacting factor 3</fullName>
    </alternativeName>
</protein>
<evidence type="ECO:0000250" key="1"/>
<evidence type="ECO:0000256" key="2">
    <source>
        <dbReference type="SAM" id="MobiDB-lite"/>
    </source>
</evidence>
<evidence type="ECO:0000269" key="3">
    <source>
    </source>
</evidence>
<organism>
    <name type="scientific">Gallus gallus</name>
    <name type="common">Chicken</name>
    <dbReference type="NCBI Taxonomy" id="9031"/>
    <lineage>
        <taxon>Eukaryota</taxon>
        <taxon>Metazoa</taxon>
        <taxon>Chordata</taxon>
        <taxon>Craniata</taxon>
        <taxon>Vertebrata</taxon>
        <taxon>Euteleostomi</taxon>
        <taxon>Archelosauria</taxon>
        <taxon>Archosauria</taxon>
        <taxon>Dinosauria</taxon>
        <taxon>Saurischia</taxon>
        <taxon>Theropoda</taxon>
        <taxon>Coelurosauria</taxon>
        <taxon>Aves</taxon>
        <taxon>Neognathae</taxon>
        <taxon>Galloanserae</taxon>
        <taxon>Galliformes</taxon>
        <taxon>Phasianidae</taxon>
        <taxon>Phasianinae</taxon>
        <taxon>Gallus</taxon>
    </lineage>
</organism>
<name>CENPR_CHICK</name>
<reference key="1">
    <citation type="journal article" date="2006" name="Nat. Cell Biol.">
        <title>The CENP-H-I complex is required for the efficient incorporation of newly synthesized CENP-A into centromeres.</title>
        <authorList>
            <person name="Okada M."/>
            <person name="Cheeseman I.M."/>
            <person name="Hori T."/>
            <person name="Okawa K."/>
            <person name="McLeod I.X."/>
            <person name="Yates J.R. III"/>
            <person name="Desai A."/>
            <person name="Fukagawa T."/>
        </authorList>
    </citation>
    <scope>NUCLEOTIDE SEQUENCE [MRNA]</scope>
</reference>
<reference key="2">
    <citation type="journal article" date="2011" name="J. Cell Biol.">
        <title>Spindle microtubules generate tension-dependent changes in the distribution of inner kinetochore proteins.</title>
        <authorList>
            <person name="Suzuki A."/>
            <person name="Hori T."/>
            <person name="Nishino T."/>
            <person name="Usukura J."/>
            <person name="Miyagi A."/>
            <person name="Morikawa K."/>
            <person name="Fukagawa T."/>
        </authorList>
    </citation>
    <scope>SUBCELLULAR LOCATION</scope>
</reference>
<comment type="function">
    <text evidence="1">Transcription coregulator that can have both coactivator and corepressor functions. Involved in the coactivation of nuclear receptors for retinoid X (RXRs) and thyroid hormone (TRs) in a ligand-dependent fashion. Probable component of a centromeric complex involved in assembly of kinetochore proteins, mitotic progression and chromosome segregation (By similarity).</text>
</comment>
<comment type="subcellular location">
    <subcellularLocation>
        <location evidence="3">Nucleus</location>
    </subcellularLocation>
    <subcellularLocation>
        <location evidence="3">Chromosome</location>
        <location evidence="3">Centromere</location>
    </subcellularLocation>
    <subcellularLocation>
        <location evidence="3">Chromosome</location>
        <location evidence="3">Centromere</location>
        <location evidence="3">Kinetochore</location>
    </subcellularLocation>
    <text>Localizes to the inner kinetochore domain of centromeres.</text>
</comment>
<comment type="domain">
    <text evidence="1">Contains one Leu-Xaa-Xaa-Leu-Leu (LXXLL) motif, a motif known to be important for the association with nuclear receptors.</text>
</comment>
<proteinExistence type="evidence at transcript level"/>